<name>TIF5A_ARATH</name>
<keyword id="KW-0007">Acetylation</keyword>
<keyword id="KW-1184">Jasmonic acid signaling pathway</keyword>
<keyword id="KW-0539">Nucleus</keyword>
<keyword id="KW-0611">Plant defense</keyword>
<keyword id="KW-1185">Reference proteome</keyword>
<keyword id="KW-0804">Transcription</keyword>
<keyword id="KW-0805">Transcription regulation</keyword>
<keyword id="KW-0832">Ubl conjugation</keyword>
<feature type="chain" id="PRO_0000300645" description="Protein TIFY 5A">
    <location>
        <begin position="1"/>
        <end position="131"/>
    </location>
</feature>
<feature type="domain" description="Tify" evidence="4">
    <location>
        <begin position="39"/>
        <end position="74"/>
    </location>
</feature>
<feature type="region of interest" description="Disordered" evidence="6">
    <location>
        <begin position="14"/>
        <end position="44"/>
    </location>
</feature>
<feature type="region of interest" description="Disordered" evidence="6">
    <location>
        <begin position="74"/>
        <end position="131"/>
    </location>
</feature>
<feature type="short sequence motif" description="EAR" evidence="16">
    <location>
        <begin position="9"/>
        <end position="13"/>
    </location>
</feature>
<feature type="short sequence motif" description="Jas" evidence="3">
    <location>
        <begin position="105"/>
        <end position="127"/>
    </location>
</feature>
<feature type="short sequence motif" description="Nuclear localization signal" evidence="5">
    <location>
        <begin position="106"/>
        <end position="113"/>
    </location>
</feature>
<feature type="compositionally biased region" description="Low complexity" evidence="6">
    <location>
        <begin position="16"/>
        <end position="34"/>
    </location>
</feature>
<feature type="compositionally biased region" description="Polar residues" evidence="6">
    <location>
        <begin position="79"/>
        <end position="100"/>
    </location>
</feature>
<feature type="compositionally biased region" description="Polar residues" evidence="6">
    <location>
        <begin position="122"/>
        <end position="131"/>
    </location>
</feature>
<feature type="mutagenesis site" description="Loss of transcriptional repression activity." evidence="11">
    <original>LELRL</original>
    <variation>AAAAA</variation>
    <location>
        <begin position="9"/>
        <end position="13"/>
    </location>
</feature>
<feature type="mutagenesis site" description="Loss of transcriptional repression activity." evidence="11">
    <location>
        <begin position="9"/>
        <end position="13"/>
    </location>
</feature>
<feature type="mutagenesis site" description="Decreased transcriptional repression activity.">
    <original>L</original>
    <variation>A</variation>
    <location>
        <position position="9"/>
    </location>
</feature>
<feature type="mutagenesis site" description="Decreased transcriptional repression activity.">
    <original>E</original>
    <variation>A</variation>
    <location>
        <position position="10"/>
    </location>
</feature>
<feature type="mutagenesis site" description="Loss of transcriptional repression activity.">
    <original>L</original>
    <variation>A</variation>
    <location>
        <position position="11"/>
    </location>
</feature>
<feature type="mutagenesis site" description="Decreased transcriptional repression activity.">
    <original>R</original>
    <variation>A</variation>
    <location>
        <position position="12"/>
    </location>
</feature>
<feature type="mutagenesis site" description="Decreased transcriptional repression activity.">
    <original>L</original>
    <variation>A</variation>
    <location>
        <position position="13"/>
    </location>
</feature>
<feature type="mutagenesis site" description="No effect on transcriptional repression activity." evidence="11">
    <original>F</original>
    <variation>A</variation>
    <location>
        <position position="14"/>
    </location>
</feature>
<feature type="mutagenesis site" description="Jasmonoyl-isoleucine-dependent interaction with COI1, but no effect on interaction with MYC2." evidence="11">
    <original>PKASM</original>
    <variation>LPIAR</variation>
    <location>
        <begin position="102"/>
        <end position="106"/>
    </location>
</feature>
<reference key="1">
    <citation type="journal article" date="2000" name="Nature">
        <title>Sequence and analysis of chromosome 1 of the plant Arabidopsis thaliana.</title>
        <authorList>
            <person name="Theologis A."/>
            <person name="Ecker J.R."/>
            <person name="Palm C.J."/>
            <person name="Federspiel N.A."/>
            <person name="Kaul S."/>
            <person name="White O."/>
            <person name="Alonso J."/>
            <person name="Altafi H."/>
            <person name="Araujo R."/>
            <person name="Bowman C.L."/>
            <person name="Brooks S.Y."/>
            <person name="Buehler E."/>
            <person name="Chan A."/>
            <person name="Chao Q."/>
            <person name="Chen H."/>
            <person name="Cheuk R.F."/>
            <person name="Chin C.W."/>
            <person name="Chung M.K."/>
            <person name="Conn L."/>
            <person name="Conway A.B."/>
            <person name="Conway A.R."/>
            <person name="Creasy T.H."/>
            <person name="Dewar K."/>
            <person name="Dunn P."/>
            <person name="Etgu P."/>
            <person name="Feldblyum T.V."/>
            <person name="Feng J.-D."/>
            <person name="Fong B."/>
            <person name="Fujii C.Y."/>
            <person name="Gill J.E."/>
            <person name="Goldsmith A.D."/>
            <person name="Haas B."/>
            <person name="Hansen N.F."/>
            <person name="Hughes B."/>
            <person name="Huizar L."/>
            <person name="Hunter J.L."/>
            <person name="Jenkins J."/>
            <person name="Johnson-Hopson C."/>
            <person name="Khan S."/>
            <person name="Khaykin E."/>
            <person name="Kim C.J."/>
            <person name="Koo H.L."/>
            <person name="Kremenetskaia I."/>
            <person name="Kurtz D.B."/>
            <person name="Kwan A."/>
            <person name="Lam B."/>
            <person name="Langin-Hooper S."/>
            <person name="Lee A."/>
            <person name="Lee J.M."/>
            <person name="Lenz C.A."/>
            <person name="Li J.H."/>
            <person name="Li Y.-P."/>
            <person name="Lin X."/>
            <person name="Liu S.X."/>
            <person name="Liu Z.A."/>
            <person name="Luros J.S."/>
            <person name="Maiti R."/>
            <person name="Marziali A."/>
            <person name="Militscher J."/>
            <person name="Miranda M."/>
            <person name="Nguyen M."/>
            <person name="Nierman W.C."/>
            <person name="Osborne B.I."/>
            <person name="Pai G."/>
            <person name="Peterson J."/>
            <person name="Pham P.K."/>
            <person name="Rizzo M."/>
            <person name="Rooney T."/>
            <person name="Rowley D."/>
            <person name="Sakano H."/>
            <person name="Salzberg S.L."/>
            <person name="Schwartz J.R."/>
            <person name="Shinn P."/>
            <person name="Southwick A.M."/>
            <person name="Sun H."/>
            <person name="Tallon L.J."/>
            <person name="Tambunga G."/>
            <person name="Toriumi M.J."/>
            <person name="Town C.D."/>
            <person name="Utterback T."/>
            <person name="Van Aken S."/>
            <person name="Vaysberg M."/>
            <person name="Vysotskaia V.S."/>
            <person name="Walker M."/>
            <person name="Wu D."/>
            <person name="Yu G."/>
            <person name="Fraser C.M."/>
            <person name="Venter J.C."/>
            <person name="Davis R.W."/>
        </authorList>
    </citation>
    <scope>NUCLEOTIDE SEQUENCE [LARGE SCALE GENOMIC DNA]</scope>
    <source>
        <strain>cv. Columbia</strain>
    </source>
</reference>
<reference key="2">
    <citation type="journal article" date="2017" name="Plant J.">
        <title>Araport11: a complete reannotation of the Arabidopsis thaliana reference genome.</title>
        <authorList>
            <person name="Cheng C.Y."/>
            <person name="Krishnakumar V."/>
            <person name="Chan A.P."/>
            <person name="Thibaud-Nissen F."/>
            <person name="Schobel S."/>
            <person name="Town C.D."/>
        </authorList>
    </citation>
    <scope>GENOME REANNOTATION</scope>
    <source>
        <strain>cv. Columbia</strain>
    </source>
</reference>
<reference key="3">
    <citation type="submission" date="2002-03" db="EMBL/GenBank/DDBJ databases">
        <title>Full-length cDNA from Arabidopsis thaliana.</title>
        <authorList>
            <person name="Brover V.V."/>
            <person name="Troukhan M.E."/>
            <person name="Alexandrov N.A."/>
            <person name="Lu Y.-P."/>
            <person name="Flavell R.B."/>
            <person name="Feldmann K.A."/>
        </authorList>
    </citation>
    <scope>NUCLEOTIDE SEQUENCE [LARGE SCALE MRNA]</scope>
</reference>
<reference key="4">
    <citation type="submission" date="2006-07" db="EMBL/GenBank/DDBJ databases">
        <title>Arabidopsis ORF clones.</title>
        <authorList>
            <person name="Quinitio C."/>
            <person name="Chen H."/>
            <person name="Kim C.J."/>
            <person name="Shinn P."/>
            <person name="Ecker J.R."/>
        </authorList>
    </citation>
    <scope>NUCLEOTIDE SEQUENCE [LARGE SCALE MRNA]</scope>
    <source>
        <strain>cv. Columbia</strain>
    </source>
</reference>
<reference key="5">
    <citation type="journal article" date="2007" name="Nature">
        <title>The JAZ family of repressors is the missing link in jasmonate signalling.</title>
        <authorList>
            <person name="Chini A."/>
            <person name="Fonseca S."/>
            <person name="Fernandez G."/>
            <person name="Adie B."/>
            <person name="Chico J.M."/>
            <person name="Lorenzo O."/>
            <person name="Garcia-Casado G."/>
            <person name="Lopez-Vidriero I."/>
            <person name="Lozano F.M."/>
            <person name="Ponce M.R."/>
            <person name="Micol J.L."/>
            <person name="Solano R."/>
        </authorList>
    </citation>
    <scope>GENE FAMILY</scope>
    <scope>NOMENCLATURE</scope>
</reference>
<reference key="6">
    <citation type="journal article" date="2007" name="Plant Cell">
        <title>A downstream mediator in the growth repression limb of the jasmonate pathway.</title>
        <authorList>
            <person name="Yan Y."/>
            <person name="Stolz S."/>
            <person name="Chetelat A."/>
            <person name="Reymond P."/>
            <person name="Pagni M."/>
            <person name="Dubugnon L."/>
            <person name="Farmer E.E."/>
        </authorList>
    </citation>
    <scope>DOMAIN</scope>
</reference>
<reference key="7">
    <citation type="journal article" date="2007" name="Trends Plant Sci.">
        <title>The tify family previously known as ZIM.</title>
        <authorList>
            <person name="Vanholme B."/>
            <person name="Grunewald W."/>
            <person name="Bateman A."/>
            <person name="Kohchi T."/>
            <person name="Gheysen G."/>
        </authorList>
    </citation>
    <scope>GENE FAMILY</scope>
    <scope>NOMENCLATURE</scope>
</reference>
<reference key="8">
    <citation type="journal article" date="2008" name="Plant Physiol.">
        <title>Regulation and function of Arabidopsis JASMONATE ZIM-domain genes in response to wounding and herbivory.</title>
        <authorList>
            <person name="Chung H.S."/>
            <person name="Koo A.J."/>
            <person name="Gao X."/>
            <person name="Jayanty S."/>
            <person name="Thines B."/>
            <person name="Jones A.D."/>
            <person name="Howe G.A."/>
        </authorList>
    </citation>
    <scope>INDUCTION BY WOUNDING AND HERBIVORY</scope>
</reference>
<reference key="9">
    <citation type="journal article" date="2009" name="Plant Cell">
        <title>A critical role for the TIFY motif in repression of jasmonate signaling by a stabilized splice variant of the JASMONATE ZIM-domain protein JAZ10 in Arabidopsis.</title>
        <authorList>
            <person name="Chung H.S."/>
            <person name="Howe G.A."/>
        </authorList>
    </citation>
    <scope>FUNCTION</scope>
    <scope>INTERACTION WITH TIFY10A/JAZ1; TIFY10B/JAZ2; TIFY6B/JAZ3; TIFY6A/JAZ4; TIFY11A/JAZ5; TIFY11B/JAZ6; TIFY7/JAZ9; TIFY9/JAZ10 AND TIFY3B/JAZ12</scope>
</reference>
<reference key="10">
    <citation type="journal article" date="2009" name="Plant J.">
        <title>The ZIM domain mediates homo- and heteromeric interactions between Arabidopsis JAZ proteins.</title>
        <authorList>
            <person name="Chini A."/>
            <person name="Fonseca S."/>
            <person name="Chico J.M."/>
            <person name="Fernandez-Calvo P."/>
            <person name="Solano R."/>
        </authorList>
    </citation>
    <scope>INTERACTION WITH MYC2</scope>
</reference>
<reference key="11">
    <citation type="journal article" date="2011" name="Plant Cell">
        <title>The Jasmonate-ZIM domain proteins interact with the R2R3-MYB transcription factors MYB21 and MYB24 to affect Jasmonate-regulated stamen development in Arabidopsis.</title>
        <authorList>
            <person name="Song S."/>
            <person name="Qi T."/>
            <person name="Huang H."/>
            <person name="Ren Q."/>
            <person name="Wu D."/>
            <person name="Chang C."/>
            <person name="Peng W."/>
            <person name="Liu Y."/>
            <person name="Peng J."/>
            <person name="Xie D."/>
        </authorList>
    </citation>
    <scope>INTERACTION WITH MYB21 AND MYB24</scope>
</reference>
<reference key="12">
    <citation type="journal article" date="2012" name="Plant Cell">
        <title>JAZ8 lacks a canonical degron and has an EAR motif that mediates transcriptional repression of jasmonate responses in Arabidopsis.</title>
        <authorList>
            <person name="Shyu C."/>
            <person name="Figueroa P."/>
            <person name="Depew C.L."/>
            <person name="Cooke T.F."/>
            <person name="Sheard L.B."/>
            <person name="Moreno J.E."/>
            <person name="Katsir L."/>
            <person name="Zheng N."/>
            <person name="Browse J."/>
            <person name="Howe G.A."/>
        </authorList>
    </citation>
    <scope>FUNCTION</scope>
    <scope>DOMAIN</scope>
    <scope>INTERACTION WITH COI1 AND TPL</scope>
    <scope>SUBCELLULAR LOCATION</scope>
    <scope>MUTAGENESIS OF 9-LEU--LEU-13; PHE-14 AND 102-PRO--MET-106</scope>
    <scope>INDUCTION BY JASMONATE</scope>
</reference>
<reference key="13">
    <citation type="journal article" date="2013" name="PLoS Pathog.">
        <title>Bacterial effector activates jasmonate signaling by directly targeting JAZ transcriptional repressors.</title>
        <authorList>
            <person name="Jiang S."/>
            <person name="Yao J."/>
            <person name="Ma K.-W."/>
            <person name="Zhou H."/>
            <person name="Song J."/>
            <person name="He S.Y."/>
            <person name="Ma W."/>
        </authorList>
    </citation>
    <scope>INTERACTION WITH PSEUDOMONAS SYRINGAE HOPZ1A (MICROBIAL INFECTION)</scope>
    <source>
        <strain>cv. Columbia</strain>
    </source>
</reference>
<reference key="14">
    <citation type="journal article" date="2020" name="Plant Cell">
        <title>Arabidopsis JAZ proteins interact with and suppress RHD6 transcription factor to regulate jasmonate-stimulated root hair development.</title>
        <authorList>
            <person name="Han X."/>
            <person name="Zhang M."/>
            <person name="Yang M."/>
            <person name="Hu Y."/>
        </authorList>
    </citation>
    <scope>FUNCTION</scope>
    <scope>INTERACTION WITH RHD6 AND RSL1</scope>
</reference>
<gene>
    <name evidence="14" type="primary">TIFY5A</name>
    <name evidence="15" type="synonym">JAZ8</name>
    <name evidence="18" type="ordered locus">At1g30135</name>
    <name evidence="19" type="ORF">T2H7</name>
</gene>
<protein>
    <recommendedName>
        <fullName evidence="14">Protein TIFY 5A</fullName>
    </recommendedName>
    <alternativeName>
        <fullName evidence="15">Jasmonate ZIM domain-containing protein 8</fullName>
    </alternativeName>
</protein>
<comment type="function">
    <text evidence="8 11 13">Repressor of jasmonate responses. Unable to associate strongly with COI1 in the presence of jasmonoyl-isoleucine (JA-Ile) and is therefore more resistant to JA-mediated-degradation than other TIFY/JAZ proteins. Repress gene expression through direct recruitment of the corepressor TOPLESS to cognate transcription factors (PubMed:19151223, PubMed:22327740). Interacts with and suppresses RHD6 and RSL1 transcription factor activities to negatively regulate jasmonate-stimulated root hair development (PubMed:31988260).</text>
</comment>
<comment type="subunit">
    <text evidence="8 9 10 11 13">Interacts with TPL and weakly with COI1, but not with AFPH2/NINJA (PubMed:22327740). Interacts with MYC2, MYB21, MYB24, TIFY10A/JAZ1, TIFY10B/JAZ2, TIFY6B/JAZ3, TIFY6A/JAZ4, TIFY11A/JAZ5, TIFY11B/JAZ6, TIFY7/JAZ9, TIFY9/JAZ10 and TIFY3B/JAZ12 (PubMed:19151223, PubMed:19309455, PubMed:21447791, PubMed:22327740). Interacts with RHD6 and RSL1 (PubMed:31988260).</text>
</comment>
<comment type="subunit">
    <text evidence="12">(Microbial infection) Interacts with the pathogenic Pseudomonas syringae HopZ1a protein.</text>
</comment>
<comment type="interaction">
    <interactant intactId="EBI-2312143">
        <id>Q8LBM2</id>
    </interactant>
    <interactant intactId="EBI-15191535">
        <id>O80748</id>
        <label>BBX26</label>
    </interactant>
    <organismsDiffer>false</organismsDiffer>
    <experiments>3</experiments>
</comment>
<comment type="interaction">
    <interactant intactId="EBI-2312143">
        <id>Q8LBM2</id>
    </interactant>
    <interactant intactId="EBI-4434261">
        <id>Q9LNJ5</id>
        <label>BHLH13</label>
    </interactant>
    <organismsDiffer>false</organismsDiffer>
    <experiments>7</experiments>
</comment>
<comment type="interaction">
    <interactant intactId="EBI-2312143">
        <id>Q8LBM2</id>
    </interactant>
    <interactant intactId="EBI-1792336">
        <id>Q39204</id>
        <label>MYC2</label>
    </interactant>
    <organismsDiffer>false</organismsDiffer>
    <experiments>7</experiments>
</comment>
<comment type="interaction">
    <interactant intactId="EBI-2312143">
        <id>Q8LBM2</id>
    </interactant>
    <interactant intactId="EBI-15845995">
        <id>Q9FIP9</id>
        <label>MYC3</label>
    </interactant>
    <organismsDiffer>false</organismsDiffer>
    <experiments>2</experiments>
</comment>
<comment type="interaction">
    <interactant intactId="EBI-2312143">
        <id>Q8LBM2</id>
    </interactant>
    <interactant intactId="EBI-15406909">
        <id>O49687</id>
        <label>MYC4</label>
    </interactant>
    <organismsDiffer>false</organismsDiffer>
    <experiments>4</experiments>
</comment>
<comment type="interaction">
    <interactant intactId="EBI-2312143">
        <id>Q8LBM2</id>
    </interactant>
    <interactant intactId="EBI-4426144">
        <id>Q9C9L2</id>
        <label>TCP15</label>
    </interactant>
    <organismsDiffer>false</organismsDiffer>
    <experiments>3</experiments>
</comment>
<comment type="interaction">
    <interactant intactId="EBI-2312143">
        <id>Q8LBM2</id>
    </interactant>
    <interactant intactId="EBI-1388539">
        <id>Q9LMA8</id>
        <label>TIFY10A</label>
    </interactant>
    <organismsDiffer>false</organismsDiffer>
    <experiments>12</experiments>
</comment>
<comment type="subcellular location">
    <subcellularLocation>
        <location evidence="5 11">Nucleus</location>
    </subcellularLocation>
</comment>
<comment type="induction">
    <text evidence="2">(Microbial infection) Triggered to degradation by the pathogenic Pseudomonas syringae HopZ1a protein in a COI1-dependent manner, thereby activating host jasmonate signaling.</text>
</comment>
<comment type="induction">
    <text evidence="7 11">Up-regulated by jasmonate, wounding and herbivory.</text>
</comment>
<comment type="domain">
    <text evidence="1 11">The jas domain (105-127) lacks the canonical jasmonoyl-isoleucine (JA-Ile) degron LPIARR that strongly interact with COI1 in the presence of JA-Ile in other TIFY/JAZ proteins (PubMed:22327740). The LxLxL-type EAR (ERF-associated amphiphilic repression) motif (9-13) is required for the interaction with the corepressor TOPLESS (PubMed:22327740). The jas domain (105-127) is required for interaction with Pseudomonas syringae HopZ1a (By similarity).</text>
</comment>
<comment type="PTM">
    <text evidence="1">(Microbial infection) Acetylated by Pseudomonas syringae HopZ1a.</text>
</comment>
<comment type="PTM">
    <text evidence="16">Ubiquitinated.</text>
</comment>
<comment type="miscellaneous">
    <text evidence="17">TIFY5A/JAZ8-mediated repression does not require the tify domain, which, in other TIFY/JAZ proteins, recruits the corepressor TOPLESS through the adapter protein AFPH2/NINJA.</text>
</comment>
<comment type="similarity">
    <text evidence="16">Belongs to the TIFY/JAZ family.</text>
</comment>
<dbReference type="EMBL" id="AC074176">
    <property type="status" value="NOT_ANNOTATED_CDS"/>
    <property type="molecule type" value="Genomic_DNA"/>
</dbReference>
<dbReference type="EMBL" id="CP002684">
    <property type="protein sequence ID" value="AEE31184.1"/>
    <property type="molecule type" value="Genomic_DNA"/>
</dbReference>
<dbReference type="EMBL" id="AY087122">
    <property type="protein sequence ID" value="AAM64680.1"/>
    <property type="molecule type" value="mRNA"/>
</dbReference>
<dbReference type="EMBL" id="BT026098">
    <property type="protein sequence ID" value="ABG48454.1"/>
    <property type="molecule type" value="mRNA"/>
</dbReference>
<dbReference type="RefSeq" id="NP_564349.1">
    <property type="nucleotide sequence ID" value="NM_102753.4"/>
</dbReference>
<dbReference type="SMR" id="Q8LBM2"/>
<dbReference type="BioGRID" id="25128">
    <property type="interactions" value="31"/>
</dbReference>
<dbReference type="DIP" id="DIP-53277N"/>
<dbReference type="FunCoup" id="Q8LBM2">
    <property type="interactions" value="14"/>
</dbReference>
<dbReference type="IntAct" id="Q8LBM2">
    <property type="interactions" value="17"/>
</dbReference>
<dbReference type="STRING" id="3702.Q8LBM2"/>
<dbReference type="iPTMnet" id="Q8LBM2"/>
<dbReference type="PaxDb" id="3702-AT1G30135.1"/>
<dbReference type="EnsemblPlants" id="AT1G30135.1">
    <property type="protein sequence ID" value="AT1G30135.1"/>
    <property type="gene ID" value="AT1G30135"/>
</dbReference>
<dbReference type="GeneID" id="839893"/>
<dbReference type="Gramene" id="AT1G30135.1">
    <property type="protein sequence ID" value="AT1G30135.1"/>
    <property type="gene ID" value="AT1G30135"/>
</dbReference>
<dbReference type="KEGG" id="ath:AT1G30135"/>
<dbReference type="Araport" id="AT1G30135"/>
<dbReference type="TAIR" id="AT1G30135">
    <property type="gene designation" value="JAZ8"/>
</dbReference>
<dbReference type="eggNOG" id="ENOG502S434">
    <property type="taxonomic scope" value="Eukaryota"/>
</dbReference>
<dbReference type="HOGENOM" id="CLU_113486_0_0_1"/>
<dbReference type="InParanoid" id="Q8LBM2"/>
<dbReference type="OMA" id="GRICACD"/>
<dbReference type="OrthoDB" id="782771at2759"/>
<dbReference type="PhylomeDB" id="Q8LBM2"/>
<dbReference type="PRO" id="PR:Q8LBM2"/>
<dbReference type="Proteomes" id="UP000006548">
    <property type="component" value="Chromosome 1"/>
</dbReference>
<dbReference type="ExpressionAtlas" id="Q8LBM2">
    <property type="expression patterns" value="baseline and differential"/>
</dbReference>
<dbReference type="GO" id="GO:0005634">
    <property type="term" value="C:nucleus"/>
    <property type="evidence" value="ECO:0007669"/>
    <property type="project" value="UniProtKB-SubCell"/>
</dbReference>
<dbReference type="GO" id="GO:0006952">
    <property type="term" value="P:defense response"/>
    <property type="evidence" value="ECO:0007669"/>
    <property type="project" value="UniProtKB-KW"/>
</dbReference>
<dbReference type="InterPro" id="IPR018467">
    <property type="entry name" value="CCT_CS"/>
</dbReference>
<dbReference type="InterPro" id="IPR040390">
    <property type="entry name" value="TIFY/JAZ"/>
</dbReference>
<dbReference type="InterPro" id="IPR010399">
    <property type="entry name" value="Tify_dom"/>
</dbReference>
<dbReference type="PANTHER" id="PTHR33077">
    <property type="entry name" value="PROTEIN TIFY 4A-RELATED-RELATED"/>
    <property type="match status" value="1"/>
</dbReference>
<dbReference type="PANTHER" id="PTHR33077:SF70">
    <property type="entry name" value="PROTEIN TIFY 5A"/>
    <property type="match status" value="1"/>
</dbReference>
<dbReference type="Pfam" id="PF09425">
    <property type="entry name" value="Jas_motif"/>
    <property type="match status" value="1"/>
</dbReference>
<dbReference type="Pfam" id="PF06200">
    <property type="entry name" value="tify"/>
    <property type="match status" value="1"/>
</dbReference>
<dbReference type="SMART" id="SM00979">
    <property type="entry name" value="TIFY"/>
    <property type="match status" value="1"/>
</dbReference>
<dbReference type="PROSITE" id="PS51320">
    <property type="entry name" value="TIFY"/>
    <property type="match status" value="1"/>
</dbReference>
<organism>
    <name type="scientific">Arabidopsis thaliana</name>
    <name type="common">Mouse-ear cress</name>
    <dbReference type="NCBI Taxonomy" id="3702"/>
    <lineage>
        <taxon>Eukaryota</taxon>
        <taxon>Viridiplantae</taxon>
        <taxon>Streptophyta</taxon>
        <taxon>Embryophyta</taxon>
        <taxon>Tracheophyta</taxon>
        <taxon>Spermatophyta</taxon>
        <taxon>Magnoliopsida</taxon>
        <taxon>eudicotyledons</taxon>
        <taxon>Gunneridae</taxon>
        <taxon>Pentapetalae</taxon>
        <taxon>rosids</taxon>
        <taxon>malvids</taxon>
        <taxon>Brassicales</taxon>
        <taxon>Brassicaceae</taxon>
        <taxon>Camelineae</taxon>
        <taxon>Arabidopsis</taxon>
    </lineage>
</organism>
<accession>Q8LBM2</accession>
<evidence type="ECO:0000250" key="1">
    <source>
        <dbReference type="UniProtKB" id="Q9C9E3"/>
    </source>
</evidence>
<evidence type="ECO:0000250" key="2">
    <source>
        <dbReference type="UniProtKB" id="Q9LMA8"/>
    </source>
</evidence>
<evidence type="ECO:0000255" key="3"/>
<evidence type="ECO:0000255" key="4">
    <source>
        <dbReference type="PROSITE-ProRule" id="PRU00650"/>
    </source>
</evidence>
<evidence type="ECO:0000255" key="5">
    <source>
        <dbReference type="PROSITE-ProRule" id="PRU00768"/>
    </source>
</evidence>
<evidence type="ECO:0000256" key="6">
    <source>
        <dbReference type="SAM" id="MobiDB-lite"/>
    </source>
</evidence>
<evidence type="ECO:0000269" key="7">
    <source>
    </source>
</evidence>
<evidence type="ECO:0000269" key="8">
    <source>
    </source>
</evidence>
<evidence type="ECO:0000269" key="9">
    <source>
    </source>
</evidence>
<evidence type="ECO:0000269" key="10">
    <source>
    </source>
</evidence>
<evidence type="ECO:0000269" key="11">
    <source>
    </source>
</evidence>
<evidence type="ECO:0000269" key="12">
    <source>
    </source>
</evidence>
<evidence type="ECO:0000269" key="13">
    <source>
    </source>
</evidence>
<evidence type="ECO:0000303" key="14">
    <source>
    </source>
</evidence>
<evidence type="ECO:0000303" key="15">
    <source>
    </source>
</evidence>
<evidence type="ECO:0000305" key="16"/>
<evidence type="ECO:0000305" key="17">
    <source>
    </source>
</evidence>
<evidence type="ECO:0000312" key="18">
    <source>
        <dbReference type="Araport" id="AT1G30135"/>
    </source>
</evidence>
<evidence type="ECO:0000312" key="19">
    <source>
        <dbReference type="EMBL" id="AC074176"/>
    </source>
</evidence>
<sequence>MKLQQNCDLELRLFPTSYDSDSSDTTSVVESTSSGNPQPNEESQRITIFYNGKMCFSSDVTHLQARSIISIASREMKTKSSSNGSDPPNKSTSFHHNQLPNPKASMKKSLQSFLQKRKIRIQATSPYHSRR</sequence>
<proteinExistence type="evidence at protein level"/>